<name>Y1197_DICDI</name>
<accession>Q54JC7</accession>
<keyword id="KW-0067">ATP-binding</keyword>
<keyword id="KW-0418">Kinase</keyword>
<keyword id="KW-0479">Metal-binding</keyword>
<keyword id="KW-0547">Nucleotide-binding</keyword>
<keyword id="KW-1185">Reference proteome</keyword>
<keyword id="KW-0723">Serine/threonine-protein kinase</keyword>
<keyword id="KW-0808">Transferase</keyword>
<keyword id="KW-0862">Zinc</keyword>
<keyword id="KW-0863">Zinc-finger</keyword>
<feature type="chain" id="PRO_0000355155" description="Probable serine/threonine-protein kinase DDB_G0288147">
    <location>
        <begin position="1"/>
        <end position="1347"/>
    </location>
</feature>
<feature type="domain" description="Protein kinase" evidence="1">
    <location>
        <begin position="599"/>
        <end position="854"/>
    </location>
</feature>
<feature type="zinc finger region" description="Phorbol-ester/DAG-type" evidence="2">
    <location>
        <begin position="12"/>
        <end position="67"/>
    </location>
</feature>
<feature type="region of interest" description="Disordered" evidence="4">
    <location>
        <begin position="262"/>
        <end position="316"/>
    </location>
</feature>
<feature type="region of interest" description="Disordered" evidence="4">
    <location>
        <begin position="333"/>
        <end position="402"/>
    </location>
</feature>
<feature type="region of interest" description="Disordered" evidence="4">
    <location>
        <begin position="463"/>
        <end position="485"/>
    </location>
</feature>
<feature type="region of interest" description="Disordered" evidence="4">
    <location>
        <begin position="937"/>
        <end position="1241"/>
    </location>
</feature>
<feature type="region of interest" description="Disordered" evidence="4">
    <location>
        <begin position="1282"/>
        <end position="1310"/>
    </location>
</feature>
<feature type="compositionally biased region" description="Polar residues" evidence="4">
    <location>
        <begin position="271"/>
        <end position="282"/>
    </location>
</feature>
<feature type="compositionally biased region" description="Low complexity" evidence="4">
    <location>
        <begin position="286"/>
        <end position="316"/>
    </location>
</feature>
<feature type="compositionally biased region" description="Low complexity" evidence="4">
    <location>
        <begin position="333"/>
        <end position="342"/>
    </location>
</feature>
<feature type="compositionally biased region" description="Low complexity" evidence="4">
    <location>
        <begin position="350"/>
        <end position="361"/>
    </location>
</feature>
<feature type="compositionally biased region" description="Basic residues" evidence="4">
    <location>
        <begin position="366"/>
        <end position="382"/>
    </location>
</feature>
<feature type="compositionally biased region" description="Basic residues" evidence="4">
    <location>
        <begin position="389"/>
        <end position="402"/>
    </location>
</feature>
<feature type="compositionally biased region" description="Low complexity" evidence="4">
    <location>
        <begin position="464"/>
        <end position="485"/>
    </location>
</feature>
<feature type="compositionally biased region" description="Acidic residues" evidence="4">
    <location>
        <begin position="976"/>
        <end position="986"/>
    </location>
</feature>
<feature type="compositionally biased region" description="Low complexity" evidence="4">
    <location>
        <begin position="1004"/>
        <end position="1015"/>
    </location>
</feature>
<feature type="compositionally biased region" description="Low complexity" evidence="4">
    <location>
        <begin position="1024"/>
        <end position="1062"/>
    </location>
</feature>
<feature type="compositionally biased region" description="Polar residues" evidence="4">
    <location>
        <begin position="1063"/>
        <end position="1083"/>
    </location>
</feature>
<feature type="compositionally biased region" description="Polar residues" evidence="4">
    <location>
        <begin position="1118"/>
        <end position="1127"/>
    </location>
</feature>
<feature type="compositionally biased region" description="Low complexity" evidence="4">
    <location>
        <begin position="1128"/>
        <end position="1241"/>
    </location>
</feature>
<feature type="compositionally biased region" description="Low complexity" evidence="4">
    <location>
        <begin position="1282"/>
        <end position="1291"/>
    </location>
</feature>
<feature type="active site" description="Proton acceptor" evidence="1 3">
    <location>
        <position position="724"/>
    </location>
</feature>
<feature type="binding site" evidence="1">
    <location>
        <begin position="605"/>
        <end position="613"/>
    </location>
    <ligand>
        <name>ATP</name>
        <dbReference type="ChEBI" id="CHEBI:30616"/>
    </ligand>
</feature>
<feature type="binding site" evidence="1">
    <location>
        <position position="626"/>
    </location>
    <ligand>
        <name>ATP</name>
        <dbReference type="ChEBI" id="CHEBI:30616"/>
    </ligand>
</feature>
<dbReference type="EC" id="2.7.11.1"/>
<dbReference type="EMBL" id="AAFI02000109">
    <property type="protein sequence ID" value="EAL63361.1"/>
    <property type="molecule type" value="Genomic_DNA"/>
</dbReference>
<dbReference type="RefSeq" id="XP_636866.1">
    <property type="nucleotide sequence ID" value="XM_631774.1"/>
</dbReference>
<dbReference type="SMR" id="Q54JC7"/>
<dbReference type="FunCoup" id="Q54JC7">
    <property type="interactions" value="343"/>
</dbReference>
<dbReference type="STRING" id="44689.Q54JC7"/>
<dbReference type="GlyGen" id="Q54JC7">
    <property type="glycosylation" value="1 site"/>
</dbReference>
<dbReference type="PaxDb" id="44689-DDB0231197"/>
<dbReference type="EnsemblProtists" id="EAL63361">
    <property type="protein sequence ID" value="EAL63361"/>
    <property type="gene ID" value="DDB_G0288147"/>
</dbReference>
<dbReference type="GeneID" id="8626477"/>
<dbReference type="KEGG" id="ddi:DDB_G0288147"/>
<dbReference type="dictyBase" id="DDB_G0288147">
    <property type="gene designation" value="pkcA"/>
</dbReference>
<dbReference type="VEuPathDB" id="AmoebaDB:DDB_G0288147"/>
<dbReference type="eggNOG" id="KOG0192">
    <property type="taxonomic scope" value="Eukaryota"/>
</dbReference>
<dbReference type="HOGENOM" id="CLU_257973_0_0_1"/>
<dbReference type="InParanoid" id="Q54JC7"/>
<dbReference type="OMA" id="WKIALIP"/>
<dbReference type="Reactome" id="R-DDI-5675482">
    <property type="pathway name" value="Regulation of necroptotic cell death"/>
</dbReference>
<dbReference type="PRO" id="PR:Q54JC7"/>
<dbReference type="Proteomes" id="UP000002195">
    <property type="component" value="Chromosome 5"/>
</dbReference>
<dbReference type="GO" id="GO:0005737">
    <property type="term" value="C:cytoplasm"/>
    <property type="evidence" value="ECO:0000318"/>
    <property type="project" value="GO_Central"/>
</dbReference>
<dbReference type="GO" id="GO:0005764">
    <property type="term" value="C:lysosome"/>
    <property type="evidence" value="ECO:0000314"/>
    <property type="project" value="dictyBase"/>
</dbReference>
<dbReference type="GO" id="GO:0005886">
    <property type="term" value="C:plasma membrane"/>
    <property type="evidence" value="ECO:0000314"/>
    <property type="project" value="dictyBase"/>
</dbReference>
<dbReference type="GO" id="GO:0005524">
    <property type="term" value="F:ATP binding"/>
    <property type="evidence" value="ECO:0007669"/>
    <property type="project" value="UniProtKB-KW"/>
</dbReference>
<dbReference type="GO" id="GO:0004672">
    <property type="term" value="F:protein kinase activity"/>
    <property type="evidence" value="ECO:0000318"/>
    <property type="project" value="GO_Central"/>
</dbReference>
<dbReference type="GO" id="GO:0106310">
    <property type="term" value="F:protein serine kinase activity"/>
    <property type="evidence" value="ECO:0007669"/>
    <property type="project" value="RHEA"/>
</dbReference>
<dbReference type="GO" id="GO:0004674">
    <property type="term" value="F:protein serine/threonine kinase activity"/>
    <property type="evidence" value="ECO:0007669"/>
    <property type="project" value="UniProtKB-KW"/>
</dbReference>
<dbReference type="GO" id="GO:0008270">
    <property type="term" value="F:zinc ion binding"/>
    <property type="evidence" value="ECO:0007669"/>
    <property type="project" value="UniProtKB-KW"/>
</dbReference>
<dbReference type="GO" id="GO:0140582">
    <property type="term" value="P:adenylate cyclase-activating G protein-coupled cAMP receptor signaling pathway"/>
    <property type="evidence" value="ECO:0000315"/>
    <property type="project" value="dictyBase"/>
</dbReference>
<dbReference type="GO" id="GO:0140986">
    <property type="term" value="P:G protein-coupled chemorepellent receptor signaling pathway"/>
    <property type="evidence" value="ECO:0000315"/>
    <property type="project" value="dictyBase"/>
</dbReference>
<dbReference type="GO" id="GO:0110014">
    <property type="term" value="P:negative regulation of aggregation involved in sorocarp development"/>
    <property type="evidence" value="ECO:0000315"/>
    <property type="project" value="dictyBase"/>
</dbReference>
<dbReference type="GO" id="GO:0051984">
    <property type="term" value="P:positive regulation of chromosome segregation"/>
    <property type="evidence" value="ECO:0000314"/>
    <property type="project" value="dictyBase"/>
</dbReference>
<dbReference type="GO" id="GO:0010628">
    <property type="term" value="P:positive regulation of gene expression"/>
    <property type="evidence" value="ECO:0000315"/>
    <property type="project" value="dictyBase"/>
</dbReference>
<dbReference type="GO" id="GO:0009372">
    <property type="term" value="P:quorum sensing"/>
    <property type="evidence" value="ECO:0000315"/>
    <property type="project" value="dictyBase"/>
</dbReference>
<dbReference type="GO" id="GO:0030833">
    <property type="term" value="P:regulation of actin filament polymerization"/>
    <property type="evidence" value="ECO:0000315"/>
    <property type="project" value="dictyBase"/>
</dbReference>
<dbReference type="GO" id="GO:0022407">
    <property type="term" value="P:regulation of cell-cell adhesion"/>
    <property type="evidence" value="ECO:0000315"/>
    <property type="project" value="dictyBase"/>
</dbReference>
<dbReference type="GO" id="GO:0017157">
    <property type="term" value="P:regulation of exocytosis"/>
    <property type="evidence" value="ECO:0000315"/>
    <property type="project" value="dictyBase"/>
</dbReference>
<dbReference type="GO" id="GO:0048548">
    <property type="term" value="P:regulation of pinocytosis"/>
    <property type="evidence" value="ECO:0000315"/>
    <property type="project" value="dictyBase"/>
</dbReference>
<dbReference type="GO" id="GO:0044656">
    <property type="term" value="P:regulation of post-lysosomal vacuole size"/>
    <property type="evidence" value="ECO:0000315"/>
    <property type="project" value="dictyBase"/>
</dbReference>
<dbReference type="GO" id="GO:0007165">
    <property type="term" value="P:signal transduction"/>
    <property type="evidence" value="ECO:0000318"/>
    <property type="project" value="GO_Central"/>
</dbReference>
<dbReference type="GO" id="GO:0044671">
    <property type="term" value="P:sorocarp spore cell differentiation"/>
    <property type="evidence" value="ECO:0000316"/>
    <property type="project" value="dictyBase"/>
</dbReference>
<dbReference type="CDD" id="cd20829">
    <property type="entry name" value="C1_PIK3R-like_rpt1"/>
    <property type="match status" value="1"/>
</dbReference>
<dbReference type="FunFam" id="3.30.60.20:FF:000121">
    <property type="entry name" value="Probable serine/threonine-protein kinase DDB_G0288147"/>
    <property type="match status" value="1"/>
</dbReference>
<dbReference type="FunFam" id="1.10.510.10:FF:000682">
    <property type="entry name" value="WNK lysine deficient protein kinase 4"/>
    <property type="match status" value="1"/>
</dbReference>
<dbReference type="Gene3D" id="3.30.60.20">
    <property type="match status" value="1"/>
</dbReference>
<dbReference type="Gene3D" id="3.30.200.20">
    <property type="entry name" value="Phosphorylase Kinase, domain 1"/>
    <property type="match status" value="1"/>
</dbReference>
<dbReference type="Gene3D" id="1.10.510.10">
    <property type="entry name" value="Transferase(Phosphotransferase) domain 1"/>
    <property type="match status" value="1"/>
</dbReference>
<dbReference type="InterPro" id="IPR046349">
    <property type="entry name" value="C1-like_sf"/>
</dbReference>
<dbReference type="InterPro" id="IPR011009">
    <property type="entry name" value="Kinase-like_dom_sf"/>
</dbReference>
<dbReference type="InterPro" id="IPR002219">
    <property type="entry name" value="PE/DAG-bd"/>
</dbReference>
<dbReference type="InterPro" id="IPR000719">
    <property type="entry name" value="Prot_kinase_dom"/>
</dbReference>
<dbReference type="InterPro" id="IPR001245">
    <property type="entry name" value="Ser-Thr/Tyr_kinase_cat_dom"/>
</dbReference>
<dbReference type="InterPro" id="IPR008271">
    <property type="entry name" value="Ser/Thr_kinase_AS"/>
</dbReference>
<dbReference type="InterPro" id="IPR051681">
    <property type="entry name" value="Ser/Thr_Kinases-Pseudokinases"/>
</dbReference>
<dbReference type="PANTHER" id="PTHR44329">
    <property type="entry name" value="SERINE/THREONINE-PROTEIN KINASE TNNI3K-RELATED"/>
    <property type="match status" value="1"/>
</dbReference>
<dbReference type="Pfam" id="PF07714">
    <property type="entry name" value="PK_Tyr_Ser-Thr"/>
    <property type="match status" value="1"/>
</dbReference>
<dbReference type="PRINTS" id="PR00109">
    <property type="entry name" value="TYRKINASE"/>
</dbReference>
<dbReference type="SMART" id="SM00220">
    <property type="entry name" value="S_TKc"/>
    <property type="match status" value="1"/>
</dbReference>
<dbReference type="SUPFAM" id="SSF57889">
    <property type="entry name" value="Cysteine-rich domain"/>
    <property type="match status" value="1"/>
</dbReference>
<dbReference type="SUPFAM" id="SSF56112">
    <property type="entry name" value="Protein kinase-like (PK-like)"/>
    <property type="match status" value="1"/>
</dbReference>
<dbReference type="PROSITE" id="PS50011">
    <property type="entry name" value="PROTEIN_KINASE_DOM"/>
    <property type="match status" value="1"/>
</dbReference>
<dbReference type="PROSITE" id="PS00108">
    <property type="entry name" value="PROTEIN_KINASE_ST"/>
    <property type="match status" value="1"/>
</dbReference>
<dbReference type="PROSITE" id="PS50081">
    <property type="entry name" value="ZF_DAG_PE_2"/>
    <property type="match status" value="1"/>
</dbReference>
<reference key="1">
    <citation type="journal article" date="2005" name="Nature">
        <title>The genome of the social amoeba Dictyostelium discoideum.</title>
        <authorList>
            <person name="Eichinger L."/>
            <person name="Pachebat J.A."/>
            <person name="Gloeckner G."/>
            <person name="Rajandream M.A."/>
            <person name="Sucgang R."/>
            <person name="Berriman M."/>
            <person name="Song J."/>
            <person name="Olsen R."/>
            <person name="Szafranski K."/>
            <person name="Xu Q."/>
            <person name="Tunggal B."/>
            <person name="Kummerfeld S."/>
            <person name="Madera M."/>
            <person name="Konfortov B.A."/>
            <person name="Rivero F."/>
            <person name="Bankier A.T."/>
            <person name="Lehmann R."/>
            <person name="Hamlin N."/>
            <person name="Davies R."/>
            <person name="Gaudet P."/>
            <person name="Fey P."/>
            <person name="Pilcher K."/>
            <person name="Chen G."/>
            <person name="Saunders D."/>
            <person name="Sodergren E.J."/>
            <person name="Davis P."/>
            <person name="Kerhornou A."/>
            <person name="Nie X."/>
            <person name="Hall N."/>
            <person name="Anjard C."/>
            <person name="Hemphill L."/>
            <person name="Bason N."/>
            <person name="Farbrother P."/>
            <person name="Desany B."/>
            <person name="Just E."/>
            <person name="Morio T."/>
            <person name="Rost R."/>
            <person name="Churcher C.M."/>
            <person name="Cooper J."/>
            <person name="Haydock S."/>
            <person name="van Driessche N."/>
            <person name="Cronin A."/>
            <person name="Goodhead I."/>
            <person name="Muzny D.M."/>
            <person name="Mourier T."/>
            <person name="Pain A."/>
            <person name="Lu M."/>
            <person name="Harper D."/>
            <person name="Lindsay R."/>
            <person name="Hauser H."/>
            <person name="James K.D."/>
            <person name="Quiles M."/>
            <person name="Madan Babu M."/>
            <person name="Saito T."/>
            <person name="Buchrieser C."/>
            <person name="Wardroper A."/>
            <person name="Felder M."/>
            <person name="Thangavelu M."/>
            <person name="Johnson D."/>
            <person name="Knights A."/>
            <person name="Loulseged H."/>
            <person name="Mungall K.L."/>
            <person name="Oliver K."/>
            <person name="Price C."/>
            <person name="Quail M.A."/>
            <person name="Urushihara H."/>
            <person name="Hernandez J."/>
            <person name="Rabbinowitsch E."/>
            <person name="Steffen D."/>
            <person name="Sanders M."/>
            <person name="Ma J."/>
            <person name="Kohara Y."/>
            <person name="Sharp S."/>
            <person name="Simmonds M.N."/>
            <person name="Spiegler S."/>
            <person name="Tivey A."/>
            <person name="Sugano S."/>
            <person name="White B."/>
            <person name="Walker D."/>
            <person name="Woodward J.R."/>
            <person name="Winckler T."/>
            <person name="Tanaka Y."/>
            <person name="Shaulsky G."/>
            <person name="Schleicher M."/>
            <person name="Weinstock G.M."/>
            <person name="Rosenthal A."/>
            <person name="Cox E.C."/>
            <person name="Chisholm R.L."/>
            <person name="Gibbs R.A."/>
            <person name="Loomis W.F."/>
            <person name="Platzer M."/>
            <person name="Kay R.R."/>
            <person name="Williams J.G."/>
            <person name="Dear P.H."/>
            <person name="Noegel A.A."/>
            <person name="Barrell B.G."/>
            <person name="Kuspa A."/>
        </authorList>
    </citation>
    <scope>NUCLEOTIDE SEQUENCE [LARGE SCALE GENOMIC DNA]</scope>
    <source>
        <strain>AX4</strain>
    </source>
</reference>
<gene>
    <name type="ORF">DDB_G0288147</name>
</gene>
<protein>
    <recommendedName>
        <fullName>Probable serine/threonine-protein kinase DDB_G0288147</fullName>
        <ecNumber>2.7.11.1</ecNumber>
    </recommendedName>
</protein>
<organism>
    <name type="scientific">Dictyostelium discoideum</name>
    <name type="common">Social amoeba</name>
    <dbReference type="NCBI Taxonomy" id="44689"/>
    <lineage>
        <taxon>Eukaryota</taxon>
        <taxon>Amoebozoa</taxon>
        <taxon>Evosea</taxon>
        <taxon>Eumycetozoa</taxon>
        <taxon>Dictyostelia</taxon>
        <taxon>Dictyosteliales</taxon>
        <taxon>Dictyosteliaceae</taxon>
        <taxon>Dictyostelium</taxon>
    </lineage>
</organism>
<proteinExistence type="inferred from homology"/>
<sequence length="1347" mass="152496">MQPNQLKRPSLNHRFEPYTLKHLTICKRCEKEIIGVSNSAQICYSCKNIYHTRCCKEIETKKLELICLGPPKKIKTVWKIALIPSLFKSLFSKSKVIVNYSQQLINEKTFTLEAIKIWVDVMRVDNDRYIQITKYYDIFDEEVFNYIINMIIEKDINLPMVNIEFPVDLHSSVQQNQYINDQAVSQEQKQQQQQLQQQLILQQQQQQQLQQQQLNESYDNSTINNLNYSNDISNAFSPRSVFSALELSSNAQVMNALELSVPFNEDDNNDDSTLSASTYNRRNSNKNKNSNKNNTSSSSSAPASASSSKHSNLNESFSSSTTAAAIVNNIDNSNNSNNLAALSPRSTASTTTTTTTTTTTTSPKSNNHHHHQHHHQNSKSRKPSTIIINKKKIKSPKNKSSKRYMLTEQYKWSTQMIGLQILYRILFNEKNMIHFLNDKFMAPLAVLYPILINRLKAISLGSDNNNNNNNNNNNNNNNSNNNNNNNNEDFKLLSINCKLLISILNRMLDFETLIPLFFTNKVIESIAKVNSDRESLRGKLSKDEFEVMDRVVLLLGKYFHLEPYHSLIERRPEWIDMIINYSVEHKVGILHHEITRNEVKINVEIYDSPLCTVYSGVYNGMDVAIKEFSQDGMGFDWVSFYKEITIVSASQHPKVIKCYGAHTKNTNKPFIVTELCSRGTISNALNQIRKTTGQPPAIPLIVHMAIDAAQSLEFIHSKNIIHRDVKGNNFLVNENWEVKLIDFGVSRFVEARLGYTIVGTPNYMACELFNGQPYHQPADVFSFGVVLWEMFTQDTPYKNLTRIEQALFVQSGGRPTIPPTVPTTIANLIESCWVQTPHLRPTFTEILKVFYSLLTPPPDNEHLVPVVTRLFNSSIIQLKILKYLDTNTLLNCGLASRQLRYNLYNGISMEKKTFSNFWIKLMNFSKSKFRYELLSPSERKNDSTGSSPIIMCIQPFSPNSQSKNNNNNKNHHSDDIIDDDDDDDDDKTYPSLVIPFSASSPTLNINSENKNNNNVNEDKTSDTSSNSNNNNNNNNNNNNNNNNNNNNNNNNNNSNNNNNNNNLRQNQFLGNDLNKSQDNNQLMDGSGGRRDRSRSKSRSRSASPSNNHLHDKSLMGLLSSSQTSEIGDNNTNNNSDNEVDNNNNNNNNNNNNNNNNNNNNNNNNNNNNNNNNNNNNNNNNIDNNNNNKDNNNILSSENNNNTTVIEQQQQQQNVTNNNSNEPKNSNNEPKNSNITNNIVNPNVFTTTTTTTTTTRTTTTTVYDGTGTLNNLLFKINDGGIISSDSSNSLSDPESEEYSMPIKRSSSIRSPGPVSAISPLFKSLSPNLSPIVPNIINGYSFENTSACD</sequence>
<evidence type="ECO:0000255" key="1">
    <source>
        <dbReference type="PROSITE-ProRule" id="PRU00159"/>
    </source>
</evidence>
<evidence type="ECO:0000255" key="2">
    <source>
        <dbReference type="PROSITE-ProRule" id="PRU00226"/>
    </source>
</evidence>
<evidence type="ECO:0000255" key="3">
    <source>
        <dbReference type="PROSITE-ProRule" id="PRU10027"/>
    </source>
</evidence>
<evidence type="ECO:0000256" key="4">
    <source>
        <dbReference type="SAM" id="MobiDB-lite"/>
    </source>
</evidence>
<evidence type="ECO:0000305" key="5"/>
<comment type="catalytic activity">
    <reaction>
        <text>L-seryl-[protein] + ATP = O-phospho-L-seryl-[protein] + ADP + H(+)</text>
        <dbReference type="Rhea" id="RHEA:17989"/>
        <dbReference type="Rhea" id="RHEA-COMP:9863"/>
        <dbReference type="Rhea" id="RHEA-COMP:11604"/>
        <dbReference type="ChEBI" id="CHEBI:15378"/>
        <dbReference type="ChEBI" id="CHEBI:29999"/>
        <dbReference type="ChEBI" id="CHEBI:30616"/>
        <dbReference type="ChEBI" id="CHEBI:83421"/>
        <dbReference type="ChEBI" id="CHEBI:456216"/>
        <dbReference type="EC" id="2.7.11.1"/>
    </reaction>
</comment>
<comment type="catalytic activity">
    <reaction>
        <text>L-threonyl-[protein] + ATP = O-phospho-L-threonyl-[protein] + ADP + H(+)</text>
        <dbReference type="Rhea" id="RHEA:46608"/>
        <dbReference type="Rhea" id="RHEA-COMP:11060"/>
        <dbReference type="Rhea" id="RHEA-COMP:11605"/>
        <dbReference type="ChEBI" id="CHEBI:15378"/>
        <dbReference type="ChEBI" id="CHEBI:30013"/>
        <dbReference type="ChEBI" id="CHEBI:30616"/>
        <dbReference type="ChEBI" id="CHEBI:61977"/>
        <dbReference type="ChEBI" id="CHEBI:456216"/>
        <dbReference type="EC" id="2.7.11.1"/>
    </reaction>
</comment>
<comment type="similarity">
    <text evidence="5">Belongs to the protein kinase superfamily. TKL Ser/Thr protein kinase family.</text>
</comment>